<name>PYM_CULQU</name>
<dbReference type="EMBL" id="DS231949">
    <property type="protein sequence ID" value="EDS28510.1"/>
    <property type="molecule type" value="Genomic_DNA"/>
</dbReference>
<dbReference type="RefSeq" id="XP_001848521.1">
    <property type="nucleotide sequence ID" value="XM_001848469.1"/>
</dbReference>
<dbReference type="SMR" id="B0WII7"/>
<dbReference type="FunCoup" id="B0WII7">
    <property type="interactions" value="1406"/>
</dbReference>
<dbReference type="STRING" id="7176.B0WII7"/>
<dbReference type="EnsemblMetazoa" id="CPIJ006916-RA">
    <property type="protein sequence ID" value="CPIJ006916-PA"/>
    <property type="gene ID" value="CPIJ006916"/>
</dbReference>
<dbReference type="GeneID" id="6038803"/>
<dbReference type="KEGG" id="cqu:CpipJ_CPIJ006916"/>
<dbReference type="CTD" id="37780"/>
<dbReference type="VEuPathDB" id="VectorBase:CPIJ006916"/>
<dbReference type="VEuPathDB" id="VectorBase:CQUJHB006611"/>
<dbReference type="eggNOG" id="KOG4325">
    <property type="taxonomic scope" value="Eukaryota"/>
</dbReference>
<dbReference type="HOGENOM" id="CLU_074603_3_0_1"/>
<dbReference type="InParanoid" id="B0WII7"/>
<dbReference type="OMA" id="DSEMPTS"/>
<dbReference type="OrthoDB" id="21625at2759"/>
<dbReference type="PhylomeDB" id="B0WII7"/>
<dbReference type="Proteomes" id="UP000002320">
    <property type="component" value="Unassembled WGS sequence"/>
</dbReference>
<dbReference type="GO" id="GO:0005737">
    <property type="term" value="C:cytoplasm"/>
    <property type="evidence" value="ECO:0007669"/>
    <property type="project" value="UniProtKB-SubCell"/>
</dbReference>
<dbReference type="GO" id="GO:0035145">
    <property type="term" value="C:exon-exon junction complex"/>
    <property type="evidence" value="ECO:0000250"/>
    <property type="project" value="UniProtKB"/>
</dbReference>
<dbReference type="GO" id="GO:0003723">
    <property type="term" value="F:RNA binding"/>
    <property type="evidence" value="ECO:0007669"/>
    <property type="project" value="TreeGrafter"/>
</dbReference>
<dbReference type="GO" id="GO:1903259">
    <property type="term" value="P:exon-exon junction complex disassembly"/>
    <property type="evidence" value="ECO:0007669"/>
    <property type="project" value="InterPro"/>
</dbReference>
<dbReference type="GO" id="GO:0000184">
    <property type="term" value="P:nuclear-transcribed mRNA catabolic process, nonsense-mediated decay"/>
    <property type="evidence" value="ECO:0000250"/>
    <property type="project" value="UniProtKB"/>
</dbReference>
<dbReference type="InterPro" id="IPR039333">
    <property type="entry name" value="PYM1"/>
</dbReference>
<dbReference type="InterPro" id="IPR015362">
    <property type="entry name" value="WIBG_mago-bd"/>
</dbReference>
<dbReference type="InterPro" id="IPR036348">
    <property type="entry name" value="WIBG_N_sf"/>
</dbReference>
<dbReference type="PANTHER" id="PTHR22959:SF0">
    <property type="entry name" value="PARTNER OF Y14 AND MAGO"/>
    <property type="match status" value="1"/>
</dbReference>
<dbReference type="PANTHER" id="PTHR22959">
    <property type="entry name" value="PYM PROTEIN"/>
    <property type="match status" value="1"/>
</dbReference>
<dbReference type="Pfam" id="PF09282">
    <property type="entry name" value="Mago-bind"/>
    <property type="match status" value="1"/>
</dbReference>
<dbReference type="SMART" id="SM01273">
    <property type="entry name" value="Mago-bind"/>
    <property type="match status" value="1"/>
</dbReference>
<dbReference type="SUPFAM" id="SSF101931">
    <property type="entry name" value="Pym (Within the bgcn gene intron protein, WIBG), N-terminal domain"/>
    <property type="match status" value="1"/>
</dbReference>
<sequence length="238" mass="26934">MTTYATDSQGKFIPATQRPDGTWRKPRRVRDGYVPQEEVPLYESKGKLFAQKPSLPPGLPPEMAQKAREKREKEQRKAAARPAQNPVPGLLILHEDNKANQRQAKPANAKPKKKAVELPDVLLEQKQKEEQKAASRQQAQDQRNSKQQQSQNQSKPLDDVTKAVQDLQLGTASGADGHSDLSKKLRKLRKKIREIEVIEERLRASDGPRPDKDQIEKAKRKAEILKEIEELERGGGHK</sequence>
<keyword id="KW-0175">Coiled coil</keyword>
<keyword id="KW-0963">Cytoplasm</keyword>
<keyword id="KW-0539">Nucleus</keyword>
<keyword id="KW-1185">Reference proteome</keyword>
<reference key="1">
    <citation type="submission" date="2007-03" db="EMBL/GenBank/DDBJ databases">
        <title>Annotation of Culex pipiens quinquefasciatus.</title>
        <authorList>
            <consortium name="The Broad Institute Genome Sequencing Platform"/>
            <person name="Atkinson P.W."/>
            <person name="Hemingway J."/>
            <person name="Christensen B.M."/>
            <person name="Higgs S."/>
            <person name="Kodira C.D."/>
            <person name="Hannick L.I."/>
            <person name="Megy K."/>
            <person name="O'Leary S.B."/>
            <person name="Pearson M."/>
            <person name="Haas B.J."/>
            <person name="Mauceli E."/>
            <person name="Wortman J.R."/>
            <person name="Lee N.H."/>
            <person name="Guigo R."/>
            <person name="Stanke M."/>
            <person name="Alvarado L."/>
            <person name="Amedeo P."/>
            <person name="Antoine C.H."/>
            <person name="Arensburger P."/>
            <person name="Bidwell S.L."/>
            <person name="Crawford M."/>
            <person name="Camaro F."/>
            <person name="Devon K."/>
            <person name="Engels R."/>
            <person name="Hammond M."/>
            <person name="Howarth C."/>
            <person name="Koehrsen M."/>
            <person name="Lawson D."/>
            <person name="Montgomery P."/>
            <person name="Nene V."/>
            <person name="Nusbaum C."/>
            <person name="Puiu D."/>
            <person name="Romero-Severson J."/>
            <person name="Severson D.W."/>
            <person name="Shumway M."/>
            <person name="Sisk P."/>
            <person name="Stolte C."/>
            <person name="Zeng Q."/>
            <person name="Eisenstadt E."/>
            <person name="Fraser-Liggett C.M."/>
            <person name="Strausberg R."/>
            <person name="Galagan J."/>
            <person name="Birren B."/>
            <person name="Collins F.H."/>
        </authorList>
    </citation>
    <scope>NUCLEOTIDE SEQUENCE [LARGE SCALE GENOMIC DNA]</scope>
    <source>
        <strain>JHB</strain>
    </source>
</reference>
<protein>
    <recommendedName>
        <fullName evidence="2">Partner of Y14 and mago</fullName>
    </recommendedName>
    <alternativeName>
        <fullName>Protein wibg homolog</fullName>
    </alternativeName>
</protein>
<accession>B0WII7</accession>
<evidence type="ECO:0000250" key="1"/>
<evidence type="ECO:0000250" key="2">
    <source>
        <dbReference type="UniProtKB" id="P82804"/>
    </source>
</evidence>
<evidence type="ECO:0000255" key="3"/>
<evidence type="ECO:0000256" key="4">
    <source>
        <dbReference type="SAM" id="MobiDB-lite"/>
    </source>
</evidence>
<evidence type="ECO:0000305" key="5"/>
<comment type="function">
    <text evidence="1">Regulator of the exon junction complex (EJC), a multiprotein complex that associates immediately upstream of the exon-exon junction on mRNAs and serves as a positional landmarks for the intron exon structure of genes and directs post-transcriptional processes in the cytoplasm such as mRNA export, nonsense-mediated mRNA decay (NMD) or translation.</text>
</comment>
<comment type="subunit">
    <text evidence="1">Interacts (via N-terminus) with mago and tsu/Y14; the interaction is direct.</text>
</comment>
<comment type="subcellular location">
    <subcellularLocation>
        <location evidence="1">Cytoplasm</location>
    </subcellularLocation>
    <subcellularLocation>
        <location evidence="1">Nucleus</location>
    </subcellularLocation>
    <text evidence="1">Shuttles between the nucleus and the cytoplasm. Nuclear export is mediated by emb/Crm1 (By similarity).</text>
</comment>
<comment type="similarity">
    <text evidence="5">Belongs to the pym family.</text>
</comment>
<gene>
    <name evidence="2" type="primary">Pym</name>
    <name type="synonym">wibg</name>
    <name type="ORF">CPIJ006916</name>
</gene>
<proteinExistence type="inferred from homology"/>
<feature type="chain" id="PRO_0000378162" description="Partner of Y14 and mago">
    <location>
        <begin position="1"/>
        <end position="238"/>
    </location>
</feature>
<feature type="region of interest" description="Disordered" evidence="4">
    <location>
        <begin position="1"/>
        <end position="183"/>
    </location>
</feature>
<feature type="coiled-coil region" evidence="3">
    <location>
        <begin position="176"/>
        <end position="233"/>
    </location>
</feature>
<feature type="compositionally biased region" description="Basic and acidic residues" evidence="4">
    <location>
        <begin position="65"/>
        <end position="77"/>
    </location>
</feature>
<feature type="compositionally biased region" description="Basic and acidic residues" evidence="4">
    <location>
        <begin position="123"/>
        <end position="133"/>
    </location>
</feature>
<feature type="compositionally biased region" description="Low complexity" evidence="4">
    <location>
        <begin position="136"/>
        <end position="155"/>
    </location>
</feature>
<organism>
    <name type="scientific">Culex quinquefasciatus</name>
    <name type="common">Southern house mosquito</name>
    <name type="synonym">Culex pungens</name>
    <dbReference type="NCBI Taxonomy" id="7176"/>
    <lineage>
        <taxon>Eukaryota</taxon>
        <taxon>Metazoa</taxon>
        <taxon>Ecdysozoa</taxon>
        <taxon>Arthropoda</taxon>
        <taxon>Hexapoda</taxon>
        <taxon>Insecta</taxon>
        <taxon>Pterygota</taxon>
        <taxon>Neoptera</taxon>
        <taxon>Endopterygota</taxon>
        <taxon>Diptera</taxon>
        <taxon>Nematocera</taxon>
        <taxon>Culicoidea</taxon>
        <taxon>Culicidae</taxon>
        <taxon>Culicinae</taxon>
        <taxon>Culicini</taxon>
        <taxon>Culex</taxon>
        <taxon>Culex</taxon>
    </lineage>
</organism>